<reference key="1">
    <citation type="journal article" date="2004" name="Nature">
        <title>Sequence and comparative analysis of the chicken genome provide unique perspectives on vertebrate evolution.</title>
        <authorList>
            <person name="Hillier L.W."/>
            <person name="Miller W."/>
            <person name="Birney E."/>
            <person name="Warren W."/>
            <person name="Hardison R.C."/>
            <person name="Ponting C.P."/>
            <person name="Bork P."/>
            <person name="Burt D.W."/>
            <person name="Groenen M.A.M."/>
            <person name="Delany M.E."/>
            <person name="Dodgson J.B."/>
            <person name="Chinwalla A.T."/>
            <person name="Cliften P.F."/>
            <person name="Clifton S.W."/>
            <person name="Delehaunty K.D."/>
            <person name="Fronick C."/>
            <person name="Fulton R.S."/>
            <person name="Graves T.A."/>
            <person name="Kremitzki C."/>
            <person name="Layman D."/>
            <person name="Magrini V."/>
            <person name="McPherson J.D."/>
            <person name="Miner T.L."/>
            <person name="Minx P."/>
            <person name="Nash W.E."/>
            <person name="Nhan M.N."/>
            <person name="Nelson J.O."/>
            <person name="Oddy L.G."/>
            <person name="Pohl C.S."/>
            <person name="Randall-Maher J."/>
            <person name="Smith S.M."/>
            <person name="Wallis J.W."/>
            <person name="Yang S.-P."/>
            <person name="Romanov M.N."/>
            <person name="Rondelli C.M."/>
            <person name="Paton B."/>
            <person name="Smith J."/>
            <person name="Morrice D."/>
            <person name="Daniels L."/>
            <person name="Tempest H.G."/>
            <person name="Robertson L."/>
            <person name="Masabanda J.S."/>
            <person name="Griffin D.K."/>
            <person name="Vignal A."/>
            <person name="Fillon V."/>
            <person name="Jacobbson L."/>
            <person name="Kerje S."/>
            <person name="Andersson L."/>
            <person name="Crooijmans R.P."/>
            <person name="Aerts J."/>
            <person name="van der Poel J.J."/>
            <person name="Ellegren H."/>
            <person name="Caldwell R.B."/>
            <person name="Hubbard S.J."/>
            <person name="Grafham D.V."/>
            <person name="Kierzek A.M."/>
            <person name="McLaren S.R."/>
            <person name="Overton I.M."/>
            <person name="Arakawa H."/>
            <person name="Beattie K.J."/>
            <person name="Bezzubov Y."/>
            <person name="Boardman P.E."/>
            <person name="Bonfield J.K."/>
            <person name="Croning M.D.R."/>
            <person name="Davies R.M."/>
            <person name="Francis M.D."/>
            <person name="Humphray S.J."/>
            <person name="Scott C.E."/>
            <person name="Taylor R.G."/>
            <person name="Tickle C."/>
            <person name="Brown W.R.A."/>
            <person name="Rogers J."/>
            <person name="Buerstedde J.-M."/>
            <person name="Wilson S.A."/>
            <person name="Stubbs L."/>
            <person name="Ovcharenko I."/>
            <person name="Gordon L."/>
            <person name="Lucas S."/>
            <person name="Miller M.M."/>
            <person name="Inoko H."/>
            <person name="Shiina T."/>
            <person name="Kaufman J."/>
            <person name="Salomonsen J."/>
            <person name="Skjoedt K."/>
            <person name="Wong G.K.-S."/>
            <person name="Wang J."/>
            <person name="Liu B."/>
            <person name="Wang J."/>
            <person name="Yu J."/>
            <person name="Yang H."/>
            <person name="Nefedov M."/>
            <person name="Koriabine M."/>
            <person name="Dejong P.J."/>
            <person name="Goodstadt L."/>
            <person name="Webber C."/>
            <person name="Dickens N.J."/>
            <person name="Letunic I."/>
            <person name="Suyama M."/>
            <person name="Torrents D."/>
            <person name="von Mering C."/>
            <person name="Zdobnov E.M."/>
            <person name="Makova K."/>
            <person name="Nekrutenko A."/>
            <person name="Elnitski L."/>
            <person name="Eswara P."/>
            <person name="King D.C."/>
            <person name="Yang S.-P."/>
            <person name="Tyekucheva S."/>
            <person name="Radakrishnan A."/>
            <person name="Harris R.S."/>
            <person name="Chiaromonte F."/>
            <person name="Taylor J."/>
            <person name="He J."/>
            <person name="Rijnkels M."/>
            <person name="Griffiths-Jones S."/>
            <person name="Ureta-Vidal A."/>
            <person name="Hoffman M.M."/>
            <person name="Severin J."/>
            <person name="Searle S.M.J."/>
            <person name="Law A.S."/>
            <person name="Speed D."/>
            <person name="Waddington D."/>
            <person name="Cheng Z."/>
            <person name="Tuzun E."/>
            <person name="Eichler E."/>
            <person name="Bao Z."/>
            <person name="Flicek P."/>
            <person name="Shteynberg D.D."/>
            <person name="Brent M.R."/>
            <person name="Bye J.M."/>
            <person name="Huckle E.J."/>
            <person name="Chatterji S."/>
            <person name="Dewey C."/>
            <person name="Pachter L."/>
            <person name="Kouranov A."/>
            <person name="Mourelatos Z."/>
            <person name="Hatzigeorgiou A.G."/>
            <person name="Paterson A.H."/>
            <person name="Ivarie R."/>
            <person name="Brandstrom M."/>
            <person name="Axelsson E."/>
            <person name="Backstrom N."/>
            <person name="Berlin S."/>
            <person name="Webster M.T."/>
            <person name="Pourquie O."/>
            <person name="Reymond A."/>
            <person name="Ucla C."/>
            <person name="Antonarakis S.E."/>
            <person name="Long M."/>
            <person name="Emerson J.J."/>
            <person name="Betran E."/>
            <person name="Dupanloup I."/>
            <person name="Kaessmann H."/>
            <person name="Hinrichs A.S."/>
            <person name="Bejerano G."/>
            <person name="Furey T.S."/>
            <person name="Harte R.A."/>
            <person name="Raney B."/>
            <person name="Siepel A."/>
            <person name="Kent W.J."/>
            <person name="Haussler D."/>
            <person name="Eyras E."/>
            <person name="Castelo R."/>
            <person name="Abril J.F."/>
            <person name="Castellano S."/>
            <person name="Camara F."/>
            <person name="Parra G."/>
            <person name="Guigo R."/>
            <person name="Bourque G."/>
            <person name="Tesler G."/>
            <person name="Pevzner P.A."/>
            <person name="Smit A."/>
            <person name="Fulton L.A."/>
            <person name="Mardis E.R."/>
            <person name="Wilson R.K."/>
        </authorList>
    </citation>
    <scope>NUCLEOTIDE SEQUENCE [LARGE SCALE GENOMIC DNA]</scope>
    <source>
        <strain>Red jungle fowl</strain>
    </source>
</reference>
<reference key="2">
    <citation type="journal article" date="2005" name="Comp. Biochem. Physiol.">
        <title>Steady-state kinetic properties of sorbitol dehydrogenase from chicken liver.</title>
        <authorList>
            <person name="Karacaoglan V."/>
            <person name="Ozer I."/>
        </authorList>
    </citation>
    <scope>FUNCTION</scope>
    <scope>CATALYTIC ACTIVITY</scope>
    <scope>BIOPHYSICOCHEMICAL PROPERTIES</scope>
    <scope>TISSUE SPECIFICITY</scope>
    <source>
        <tissue>Liver</tissue>
    </source>
</reference>
<name>DHSO_CHICK</name>
<proteinExistence type="evidence at protein level"/>
<keyword id="KW-0007">Acetylation</keyword>
<keyword id="KW-0966">Cell projection</keyword>
<keyword id="KW-0969">Cilium</keyword>
<keyword id="KW-0282">Flagellum</keyword>
<keyword id="KW-0472">Membrane</keyword>
<keyword id="KW-0479">Metal-binding</keyword>
<keyword id="KW-0496">Mitochondrion</keyword>
<keyword id="KW-0520">NAD</keyword>
<keyword id="KW-0560">Oxidoreductase</keyword>
<keyword id="KW-1185">Reference proteome</keyword>
<keyword id="KW-0862">Zinc</keyword>
<sequence>MAATGQNLAVVVHRAGDLRLENRPIPEPGPNEVLLRMHSVGICGSDVHYWQHGRIGDFVVKDPMVLGHEASGTVIKVGAGVTHLKPGDRVAIEPGVPRETDEFCKTGRYNLSPTIFFCATPPDDGNLCRYYKHSASYCYKLPDSVTFEEGALIEPLSVGIHACKRAGVTLGSRVFVSGSGPIGLVNVIIAKMMGAAAVVVTDLSASRLQTAKELGADFTIQIKNETPQEVAAKVESLLGCMPEITVECTGVQACIQASIYATRSGGTLVLVGLGPEMVTVPIVNAAVREVDIRGIFRYCNTWPVAISLLASKRINIKPLVTHRFPLEKALEAFETTKRGEGVKIMLKCDPTDQNP</sequence>
<gene>
    <name type="primary">SORD</name>
</gene>
<feature type="initiator methionine" description="Removed" evidence="2">
    <location>
        <position position="1"/>
    </location>
</feature>
<feature type="chain" id="PRO_0000431067" description="Sorbitol dehydrogenase">
    <location>
        <begin position="2"/>
        <end position="355"/>
    </location>
</feature>
<feature type="binding site" evidence="1">
    <location>
        <position position="43"/>
    </location>
    <ligand>
        <name>Zn(2+)</name>
        <dbReference type="ChEBI" id="CHEBI:29105"/>
        <note>catalytic</note>
    </ligand>
</feature>
<feature type="binding site" evidence="1">
    <location>
        <position position="49"/>
    </location>
    <ligand>
        <name>substrate</name>
    </ligand>
</feature>
<feature type="binding site" evidence="1">
    <location>
        <position position="68"/>
    </location>
    <ligand>
        <name>Zn(2+)</name>
        <dbReference type="ChEBI" id="CHEBI:29105"/>
        <note>catalytic</note>
    </ligand>
</feature>
<feature type="binding site" evidence="1">
    <location>
        <position position="69"/>
    </location>
    <ligand>
        <name>Zn(2+)</name>
        <dbReference type="ChEBI" id="CHEBI:29105"/>
        <note>catalytic</note>
    </ligand>
</feature>
<feature type="binding site" evidence="1">
    <location>
        <position position="154"/>
    </location>
    <ligand>
        <name>substrate</name>
    </ligand>
</feature>
<feature type="binding site" evidence="2">
    <location>
        <position position="182"/>
    </location>
    <ligand>
        <name>NAD(+)</name>
        <dbReference type="ChEBI" id="CHEBI:57540"/>
    </ligand>
</feature>
<feature type="binding site" evidence="2">
    <location>
        <position position="202"/>
    </location>
    <ligand>
        <name>NAD(+)</name>
        <dbReference type="ChEBI" id="CHEBI:57540"/>
    </ligand>
</feature>
<feature type="binding site" evidence="2">
    <location>
        <position position="207"/>
    </location>
    <ligand>
        <name>NAD(+)</name>
        <dbReference type="ChEBI" id="CHEBI:57540"/>
    </ligand>
</feature>
<feature type="binding site" evidence="2">
    <location>
        <begin position="271"/>
        <end position="273"/>
    </location>
    <ligand>
        <name>NAD(+)</name>
        <dbReference type="ChEBI" id="CHEBI:57540"/>
    </ligand>
</feature>
<feature type="binding site" evidence="2">
    <location>
        <begin position="295"/>
        <end position="297"/>
    </location>
    <ligand>
        <name>NAD(+)</name>
        <dbReference type="ChEBI" id="CHEBI:57540"/>
    </ligand>
</feature>
<feature type="binding site" evidence="1">
    <location>
        <position position="297"/>
    </location>
    <ligand>
        <name>substrate</name>
    </ligand>
</feature>
<feature type="binding site" evidence="1">
    <location>
        <position position="298"/>
    </location>
    <ligand>
        <name>substrate</name>
    </ligand>
</feature>
<feature type="modified residue" description="N-acetylalanine" evidence="2">
    <location>
        <position position="2"/>
    </location>
</feature>
<evidence type="ECO:0000250" key="1">
    <source>
        <dbReference type="UniProtKB" id="P07846"/>
    </source>
</evidence>
<evidence type="ECO:0000250" key="2">
    <source>
        <dbReference type="UniProtKB" id="Q00796"/>
    </source>
</evidence>
<evidence type="ECO:0000250" key="3">
    <source>
        <dbReference type="UniProtKB" id="Q64442"/>
    </source>
</evidence>
<evidence type="ECO:0000269" key="4">
    <source>
    </source>
</evidence>
<evidence type="ECO:0000303" key="5">
    <source>
    </source>
</evidence>
<evidence type="ECO:0000305" key="6"/>
<accession>P0DMQ6</accession>
<organism>
    <name type="scientific">Gallus gallus</name>
    <name type="common">Chicken</name>
    <dbReference type="NCBI Taxonomy" id="9031"/>
    <lineage>
        <taxon>Eukaryota</taxon>
        <taxon>Metazoa</taxon>
        <taxon>Chordata</taxon>
        <taxon>Craniata</taxon>
        <taxon>Vertebrata</taxon>
        <taxon>Euteleostomi</taxon>
        <taxon>Archelosauria</taxon>
        <taxon>Archosauria</taxon>
        <taxon>Dinosauria</taxon>
        <taxon>Saurischia</taxon>
        <taxon>Theropoda</taxon>
        <taxon>Coelurosauria</taxon>
        <taxon>Aves</taxon>
        <taxon>Neognathae</taxon>
        <taxon>Galloanserae</taxon>
        <taxon>Galliformes</taxon>
        <taxon>Phasianidae</taxon>
        <taxon>Phasianinae</taxon>
        <taxon>Gallus</taxon>
    </lineage>
</organism>
<protein>
    <recommendedName>
        <fullName evidence="5">Sorbitol dehydrogenase</fullName>
        <shortName evidence="5">SDH</shortName>
        <ecNumber evidence="4">1.1.1.-</ecNumber>
    </recommendedName>
    <alternativeName>
        <fullName evidence="6">Polyol dehydrogenase</fullName>
    </alternativeName>
</protein>
<comment type="function">
    <text evidence="2 4">Polyol dehydrogenase that catalyzes the reversible NAD(+)-dependent oxidation of various sugar alcohols. Is active with D-sorbitol (D-glucitol) as substrate, leading to the C2-oxidized product D-fructose (PubMed:15649778). Is a key enzyme in the polyol pathway that interconverts glucose and fructose via sorbitol, which constitutes an important alternate route for glucose metabolism (By similarity).</text>
</comment>
<comment type="catalytic activity">
    <reaction evidence="4">
        <text>keto-D-fructose + NADH + H(+) = D-sorbitol + NAD(+)</text>
        <dbReference type="Rhea" id="RHEA:33031"/>
        <dbReference type="ChEBI" id="CHEBI:15378"/>
        <dbReference type="ChEBI" id="CHEBI:17924"/>
        <dbReference type="ChEBI" id="CHEBI:48095"/>
        <dbReference type="ChEBI" id="CHEBI:57540"/>
        <dbReference type="ChEBI" id="CHEBI:57945"/>
    </reaction>
</comment>
<comment type="cofactor">
    <cofactor evidence="1">
        <name>Zn(2+)</name>
        <dbReference type="ChEBI" id="CHEBI:29105"/>
    </cofactor>
    <text evidence="1">Binds 1 zinc ion per subunit.</text>
</comment>
<comment type="biophysicochemical properties">
    <kinetics>
        <KM evidence="4">210 uM for NAD(+) (at 25 degrees Celsius and pH 8.0)</KM>
        <KM evidence="4">3.2 mM for sorbitol (at 25 degrees Celsius and pH 8.0)</KM>
        <KM evidence="4">240 uM for NADH (at 25 degrees Celsius and pH 8.0)</KM>
        <KM evidence="4">1000 mM for D-fructose (at 25 degrees Celsius and pH 8.0)</KM>
    </kinetics>
</comment>
<comment type="subunit">
    <text evidence="1">Homotetramer.</text>
</comment>
<comment type="subcellular location">
    <subcellularLocation>
        <location evidence="3">Mitochondrion membrane</location>
        <topology evidence="3">Peripheral membrane protein</topology>
    </subcellularLocation>
    <subcellularLocation>
        <location evidence="3">Cell projection</location>
        <location evidence="3">Cilium</location>
        <location evidence="3">Flagellum</location>
    </subcellularLocation>
    <text evidence="3">Associated with mitochondria of the midpiece and near the plasma membrane in the principal piece of the flagellum.</text>
</comment>
<comment type="tissue specificity">
    <text evidence="4">Expressed in liver.</text>
</comment>
<comment type="similarity">
    <text evidence="6">Belongs to the zinc-containing alcohol dehydrogenase family.</text>
</comment>
<dbReference type="EC" id="1.1.1.-" evidence="4"/>
<dbReference type="EMBL" id="JH374619">
    <property type="status" value="NOT_ANNOTATED_CDS"/>
    <property type="molecule type" value="Genomic_DNA"/>
</dbReference>
<dbReference type="SMR" id="P0DMQ6"/>
<dbReference type="FunCoup" id="P0DMQ6">
    <property type="interactions" value="1515"/>
</dbReference>
<dbReference type="STRING" id="9031.ENSGALP00000049830"/>
<dbReference type="PaxDb" id="9031-ENSGALP00000003637"/>
<dbReference type="VEuPathDB" id="HostDB:geneid_415332"/>
<dbReference type="eggNOG" id="KOG0024">
    <property type="taxonomic scope" value="Eukaryota"/>
</dbReference>
<dbReference type="HOGENOM" id="CLU_026673_11_5_1"/>
<dbReference type="InParanoid" id="P0DMQ6"/>
<dbReference type="OrthoDB" id="1879366at2759"/>
<dbReference type="Reactome" id="R-GGA-5652227">
    <property type="pathway name" value="Fructose biosynthesis"/>
</dbReference>
<dbReference type="Reactome" id="R-GGA-5661270">
    <property type="pathway name" value="Formation of xylulose-5-phosphate"/>
</dbReference>
<dbReference type="PRO" id="PR:P0DMQ6"/>
<dbReference type="Proteomes" id="UP000000539">
    <property type="component" value="Chromosome 10"/>
</dbReference>
<dbReference type="Bgee" id="ENSGALG00000031408">
    <property type="expression patterns" value="Expressed in kidney and 13 other cell types or tissues"/>
</dbReference>
<dbReference type="GO" id="GO:0031966">
    <property type="term" value="C:mitochondrial membrane"/>
    <property type="evidence" value="ECO:0007669"/>
    <property type="project" value="UniProtKB-SubCell"/>
</dbReference>
<dbReference type="GO" id="GO:0031514">
    <property type="term" value="C:motile cilium"/>
    <property type="evidence" value="ECO:0007669"/>
    <property type="project" value="UniProtKB-SubCell"/>
</dbReference>
<dbReference type="GO" id="GO:0032991">
    <property type="term" value="C:protein-containing complex"/>
    <property type="evidence" value="ECO:0000304"/>
    <property type="project" value="AgBase"/>
</dbReference>
<dbReference type="GO" id="GO:0003939">
    <property type="term" value="F:L-iditol 2-dehydrogenase (NAD+) activity"/>
    <property type="evidence" value="ECO:0000314"/>
    <property type="project" value="AgBase"/>
</dbReference>
<dbReference type="GO" id="GO:0051287">
    <property type="term" value="F:NAD binding"/>
    <property type="evidence" value="ECO:0000314"/>
    <property type="project" value="AgBase"/>
</dbReference>
<dbReference type="GO" id="GO:0008270">
    <property type="term" value="F:zinc ion binding"/>
    <property type="evidence" value="ECO:0007669"/>
    <property type="project" value="InterPro"/>
</dbReference>
<dbReference type="GO" id="GO:0046370">
    <property type="term" value="P:fructose biosynthetic process"/>
    <property type="evidence" value="ECO:0000303"/>
    <property type="project" value="AgBase"/>
</dbReference>
<dbReference type="GO" id="GO:0006000">
    <property type="term" value="P:fructose metabolic process"/>
    <property type="evidence" value="ECO:0000314"/>
    <property type="project" value="AgBase"/>
</dbReference>
<dbReference type="GO" id="GO:0006061">
    <property type="term" value="P:sorbitol biosynthetic process"/>
    <property type="evidence" value="ECO:0000303"/>
    <property type="project" value="AgBase"/>
</dbReference>
<dbReference type="GO" id="GO:0006062">
    <property type="term" value="P:sorbitol catabolic process"/>
    <property type="evidence" value="ECO:0000314"/>
    <property type="project" value="AgBase"/>
</dbReference>
<dbReference type="CDD" id="cd05285">
    <property type="entry name" value="sorbitol_DH"/>
    <property type="match status" value="1"/>
</dbReference>
<dbReference type="FunFam" id="3.40.50.720:FF:000068">
    <property type="entry name" value="Sorbitol dehydrogenase"/>
    <property type="match status" value="1"/>
</dbReference>
<dbReference type="Gene3D" id="3.90.180.10">
    <property type="entry name" value="Medium-chain alcohol dehydrogenases, catalytic domain"/>
    <property type="match status" value="1"/>
</dbReference>
<dbReference type="Gene3D" id="3.40.50.720">
    <property type="entry name" value="NAD(P)-binding Rossmann-like Domain"/>
    <property type="match status" value="1"/>
</dbReference>
<dbReference type="InterPro" id="IPR013149">
    <property type="entry name" value="ADH-like_C"/>
</dbReference>
<dbReference type="InterPro" id="IPR013154">
    <property type="entry name" value="ADH-like_N"/>
</dbReference>
<dbReference type="InterPro" id="IPR002328">
    <property type="entry name" value="ADH_Zn_CS"/>
</dbReference>
<dbReference type="InterPro" id="IPR011032">
    <property type="entry name" value="GroES-like_sf"/>
</dbReference>
<dbReference type="InterPro" id="IPR036291">
    <property type="entry name" value="NAD(P)-bd_dom_sf"/>
</dbReference>
<dbReference type="InterPro" id="IPR020843">
    <property type="entry name" value="PKS_ER"/>
</dbReference>
<dbReference type="InterPro" id="IPR045306">
    <property type="entry name" value="SDH-like"/>
</dbReference>
<dbReference type="PANTHER" id="PTHR43161">
    <property type="entry name" value="SORBITOL DEHYDROGENASE"/>
    <property type="match status" value="1"/>
</dbReference>
<dbReference type="PANTHER" id="PTHR43161:SF9">
    <property type="entry name" value="SORBITOL DEHYDROGENASE"/>
    <property type="match status" value="1"/>
</dbReference>
<dbReference type="Pfam" id="PF08240">
    <property type="entry name" value="ADH_N"/>
    <property type="match status" value="1"/>
</dbReference>
<dbReference type="Pfam" id="PF00107">
    <property type="entry name" value="ADH_zinc_N"/>
    <property type="match status" value="1"/>
</dbReference>
<dbReference type="SMART" id="SM00829">
    <property type="entry name" value="PKS_ER"/>
    <property type="match status" value="1"/>
</dbReference>
<dbReference type="SUPFAM" id="SSF50129">
    <property type="entry name" value="GroES-like"/>
    <property type="match status" value="1"/>
</dbReference>
<dbReference type="SUPFAM" id="SSF51735">
    <property type="entry name" value="NAD(P)-binding Rossmann-fold domains"/>
    <property type="match status" value="1"/>
</dbReference>
<dbReference type="PROSITE" id="PS00059">
    <property type="entry name" value="ADH_ZINC"/>
    <property type="match status" value="1"/>
</dbReference>